<dbReference type="EMBL" id="CP000661">
    <property type="protein sequence ID" value="ABP71050.1"/>
    <property type="molecule type" value="Genomic_DNA"/>
</dbReference>
<dbReference type="SMR" id="A4WUI6"/>
<dbReference type="STRING" id="349102.Rsph17025_2160"/>
<dbReference type="KEGG" id="rsq:Rsph17025_2160"/>
<dbReference type="eggNOG" id="COG1160">
    <property type="taxonomic scope" value="Bacteria"/>
</dbReference>
<dbReference type="HOGENOM" id="CLU_016077_5_0_5"/>
<dbReference type="BioCyc" id="RSPH349102:G1G8M-2229-MONOMER"/>
<dbReference type="GO" id="GO:0005525">
    <property type="term" value="F:GTP binding"/>
    <property type="evidence" value="ECO:0007669"/>
    <property type="project" value="UniProtKB-UniRule"/>
</dbReference>
<dbReference type="GO" id="GO:0042254">
    <property type="term" value="P:ribosome biogenesis"/>
    <property type="evidence" value="ECO:0007669"/>
    <property type="project" value="UniProtKB-KW"/>
</dbReference>
<dbReference type="CDD" id="cd01894">
    <property type="entry name" value="EngA1"/>
    <property type="match status" value="1"/>
</dbReference>
<dbReference type="CDD" id="cd01895">
    <property type="entry name" value="EngA2"/>
    <property type="match status" value="1"/>
</dbReference>
<dbReference type="FunFam" id="3.30.300.20:FF:000004">
    <property type="entry name" value="GTPase Der"/>
    <property type="match status" value="1"/>
</dbReference>
<dbReference type="Gene3D" id="3.30.300.20">
    <property type="match status" value="1"/>
</dbReference>
<dbReference type="Gene3D" id="3.40.50.300">
    <property type="entry name" value="P-loop containing nucleotide triphosphate hydrolases"/>
    <property type="match status" value="2"/>
</dbReference>
<dbReference type="HAMAP" id="MF_00195">
    <property type="entry name" value="GTPase_Der"/>
    <property type="match status" value="1"/>
</dbReference>
<dbReference type="InterPro" id="IPR031166">
    <property type="entry name" value="G_ENGA"/>
</dbReference>
<dbReference type="InterPro" id="IPR006073">
    <property type="entry name" value="GTP-bd"/>
</dbReference>
<dbReference type="InterPro" id="IPR016484">
    <property type="entry name" value="GTPase_Der"/>
</dbReference>
<dbReference type="InterPro" id="IPR032859">
    <property type="entry name" value="KH_dom-like"/>
</dbReference>
<dbReference type="InterPro" id="IPR015946">
    <property type="entry name" value="KH_dom-like_a/b"/>
</dbReference>
<dbReference type="InterPro" id="IPR027417">
    <property type="entry name" value="P-loop_NTPase"/>
</dbReference>
<dbReference type="InterPro" id="IPR005225">
    <property type="entry name" value="Small_GTP-bd"/>
</dbReference>
<dbReference type="NCBIfam" id="TIGR03594">
    <property type="entry name" value="GTPase_EngA"/>
    <property type="match status" value="1"/>
</dbReference>
<dbReference type="NCBIfam" id="TIGR00231">
    <property type="entry name" value="small_GTP"/>
    <property type="match status" value="2"/>
</dbReference>
<dbReference type="PANTHER" id="PTHR43834">
    <property type="entry name" value="GTPASE DER"/>
    <property type="match status" value="1"/>
</dbReference>
<dbReference type="PANTHER" id="PTHR43834:SF6">
    <property type="entry name" value="GTPASE DER"/>
    <property type="match status" value="1"/>
</dbReference>
<dbReference type="Pfam" id="PF14714">
    <property type="entry name" value="KH_dom-like"/>
    <property type="match status" value="1"/>
</dbReference>
<dbReference type="Pfam" id="PF01926">
    <property type="entry name" value="MMR_HSR1"/>
    <property type="match status" value="2"/>
</dbReference>
<dbReference type="PIRSF" id="PIRSF006485">
    <property type="entry name" value="GTP-binding_EngA"/>
    <property type="match status" value="1"/>
</dbReference>
<dbReference type="PRINTS" id="PR00449">
    <property type="entry name" value="RASTRNSFRMNG"/>
</dbReference>
<dbReference type="SUPFAM" id="SSF52540">
    <property type="entry name" value="P-loop containing nucleoside triphosphate hydrolases"/>
    <property type="match status" value="2"/>
</dbReference>
<dbReference type="PROSITE" id="PS51712">
    <property type="entry name" value="G_ENGA"/>
    <property type="match status" value="2"/>
</dbReference>
<reference key="1">
    <citation type="submission" date="2007-04" db="EMBL/GenBank/DDBJ databases">
        <title>Complete sequence of chromosome of Rhodobacter sphaeroides ATCC 17025.</title>
        <authorList>
            <consortium name="US DOE Joint Genome Institute"/>
            <person name="Copeland A."/>
            <person name="Lucas S."/>
            <person name="Lapidus A."/>
            <person name="Barry K."/>
            <person name="Detter J.C."/>
            <person name="Glavina del Rio T."/>
            <person name="Hammon N."/>
            <person name="Israni S."/>
            <person name="Dalin E."/>
            <person name="Tice H."/>
            <person name="Pitluck S."/>
            <person name="Chertkov O."/>
            <person name="Brettin T."/>
            <person name="Bruce D."/>
            <person name="Han C."/>
            <person name="Schmutz J."/>
            <person name="Larimer F."/>
            <person name="Land M."/>
            <person name="Hauser L."/>
            <person name="Kyrpides N."/>
            <person name="Kim E."/>
            <person name="Richardson P."/>
            <person name="Mackenzie C."/>
            <person name="Choudhary M."/>
            <person name="Donohue T.J."/>
            <person name="Kaplan S."/>
        </authorList>
    </citation>
    <scope>NUCLEOTIDE SEQUENCE [LARGE SCALE GENOMIC DNA]</scope>
    <source>
        <strain>ATCC 17025 / ATH 2.4.3</strain>
    </source>
</reference>
<keyword id="KW-0342">GTP-binding</keyword>
<keyword id="KW-0547">Nucleotide-binding</keyword>
<keyword id="KW-0677">Repeat</keyword>
<keyword id="KW-0690">Ribosome biogenesis</keyword>
<accession>A4WUI6</accession>
<organism>
    <name type="scientific">Cereibacter sphaeroides (strain ATCC 17025 / ATH 2.4.3)</name>
    <name type="common">Rhodobacter sphaeroides</name>
    <dbReference type="NCBI Taxonomy" id="349102"/>
    <lineage>
        <taxon>Bacteria</taxon>
        <taxon>Pseudomonadati</taxon>
        <taxon>Pseudomonadota</taxon>
        <taxon>Alphaproteobacteria</taxon>
        <taxon>Rhodobacterales</taxon>
        <taxon>Paracoccaceae</taxon>
        <taxon>Cereibacter</taxon>
    </lineage>
</organism>
<feature type="chain" id="PRO_1000011722" description="GTPase Der">
    <location>
        <begin position="1"/>
        <end position="487"/>
    </location>
</feature>
<feature type="domain" description="EngA-type G 1">
    <location>
        <begin position="3"/>
        <end position="167"/>
    </location>
</feature>
<feature type="domain" description="EngA-type G 2">
    <location>
        <begin position="203"/>
        <end position="378"/>
    </location>
</feature>
<feature type="domain" description="KH-like" evidence="1">
    <location>
        <begin position="379"/>
        <end position="463"/>
    </location>
</feature>
<feature type="region of interest" description="Disordered" evidence="2">
    <location>
        <begin position="459"/>
        <end position="487"/>
    </location>
</feature>
<feature type="compositionally biased region" description="Basic residues" evidence="2">
    <location>
        <begin position="471"/>
        <end position="487"/>
    </location>
</feature>
<feature type="binding site" evidence="1">
    <location>
        <begin position="9"/>
        <end position="16"/>
    </location>
    <ligand>
        <name>GTP</name>
        <dbReference type="ChEBI" id="CHEBI:37565"/>
        <label>1</label>
    </ligand>
</feature>
<feature type="binding site" evidence="1">
    <location>
        <begin position="56"/>
        <end position="60"/>
    </location>
    <ligand>
        <name>GTP</name>
        <dbReference type="ChEBI" id="CHEBI:37565"/>
        <label>1</label>
    </ligand>
</feature>
<feature type="binding site" evidence="1">
    <location>
        <begin position="119"/>
        <end position="122"/>
    </location>
    <ligand>
        <name>GTP</name>
        <dbReference type="ChEBI" id="CHEBI:37565"/>
        <label>1</label>
    </ligand>
</feature>
<feature type="binding site" evidence="1">
    <location>
        <begin position="209"/>
        <end position="216"/>
    </location>
    <ligand>
        <name>GTP</name>
        <dbReference type="ChEBI" id="CHEBI:37565"/>
        <label>2</label>
    </ligand>
</feature>
<feature type="binding site" evidence="1">
    <location>
        <begin position="256"/>
        <end position="260"/>
    </location>
    <ligand>
        <name>GTP</name>
        <dbReference type="ChEBI" id="CHEBI:37565"/>
        <label>2</label>
    </ligand>
</feature>
<feature type="binding site" evidence="1">
    <location>
        <begin position="321"/>
        <end position="324"/>
    </location>
    <ligand>
        <name>GTP</name>
        <dbReference type="ChEBI" id="CHEBI:37565"/>
        <label>2</label>
    </ligand>
</feature>
<sequence length="487" mass="53965">MSFTLAIVGRPNVGKSTLFNRLVGKRLALVDDQPGVTRDLREGDARLIDLRFTVIDTAGLEEVTDDSLQGRMRRLTERAVEMADVCLFLIDGRVGVTPSDEVFADILRKKNAHVILGVNKAEGRAGDAGAIEAWSLGLGEPVRLSAEHGEGMDDLYHILRPIAEGFAERAAADAPVVDVDVSEEEADLEADPDAHKPTVKRPLQIAVIGRPNAGKSTLINKIIGEDRLLTGPEAGITRDAISVRSEWQGTPIRIFDTAGMRKKARISDKLEKLSVADGLRAVRFAEVVVVLLDVEIPFEQQDLRIADFAETEGRAVVVAVNKWDLEGEKQEKLAELKEMFDRLLPQLRGAPLVTVSAKTGRGLDRLHAAILKAHDIWNRRITTARLNSWLGAMVEAHPPPAPGGRRIKLRYMTQVKTRPPGFVVMCSHPDEMPDSYRRYLVNGLRDHFDMPGTPIRLTMRGQGDKNPFKERKFRTPSRLRKHLGKKG</sequence>
<protein>
    <recommendedName>
        <fullName evidence="1">GTPase Der</fullName>
    </recommendedName>
    <alternativeName>
        <fullName evidence="1">GTP-binding protein EngA</fullName>
    </alternativeName>
</protein>
<proteinExistence type="inferred from homology"/>
<name>DER_CERS5</name>
<comment type="function">
    <text evidence="1">GTPase that plays an essential role in the late steps of ribosome biogenesis.</text>
</comment>
<comment type="subunit">
    <text evidence="1">Associates with the 50S ribosomal subunit.</text>
</comment>
<comment type="similarity">
    <text evidence="1">Belongs to the TRAFAC class TrmE-Era-EngA-EngB-Septin-like GTPase superfamily. EngA (Der) GTPase family.</text>
</comment>
<evidence type="ECO:0000255" key="1">
    <source>
        <dbReference type="HAMAP-Rule" id="MF_00195"/>
    </source>
</evidence>
<evidence type="ECO:0000256" key="2">
    <source>
        <dbReference type="SAM" id="MobiDB-lite"/>
    </source>
</evidence>
<gene>
    <name evidence="1" type="primary">der</name>
    <name type="synonym">engA</name>
    <name type="ordered locus">Rsph17025_2160</name>
</gene>